<evidence type="ECO:0000255" key="1">
    <source>
        <dbReference type="HAMAP-Rule" id="MF_00148"/>
    </source>
</evidence>
<accession>A1SNW4</accession>
<dbReference type="EC" id="3.2.2.27" evidence="1"/>
<dbReference type="EMBL" id="CP000509">
    <property type="protein sequence ID" value="ABL83499.1"/>
    <property type="molecule type" value="Genomic_DNA"/>
</dbReference>
<dbReference type="SMR" id="A1SNW4"/>
<dbReference type="STRING" id="196162.Noca_4002"/>
<dbReference type="KEGG" id="nca:Noca_4002"/>
<dbReference type="eggNOG" id="COG0692">
    <property type="taxonomic scope" value="Bacteria"/>
</dbReference>
<dbReference type="HOGENOM" id="CLU_032162_3_1_11"/>
<dbReference type="OrthoDB" id="9804372at2"/>
<dbReference type="Proteomes" id="UP000000640">
    <property type="component" value="Chromosome"/>
</dbReference>
<dbReference type="GO" id="GO:0005737">
    <property type="term" value="C:cytoplasm"/>
    <property type="evidence" value="ECO:0007669"/>
    <property type="project" value="UniProtKB-SubCell"/>
</dbReference>
<dbReference type="GO" id="GO:0004844">
    <property type="term" value="F:uracil DNA N-glycosylase activity"/>
    <property type="evidence" value="ECO:0007669"/>
    <property type="project" value="UniProtKB-UniRule"/>
</dbReference>
<dbReference type="GO" id="GO:0097510">
    <property type="term" value="P:base-excision repair, AP site formation via deaminated base removal"/>
    <property type="evidence" value="ECO:0007669"/>
    <property type="project" value="TreeGrafter"/>
</dbReference>
<dbReference type="CDD" id="cd10027">
    <property type="entry name" value="UDG-F1-like"/>
    <property type="match status" value="1"/>
</dbReference>
<dbReference type="FunFam" id="3.40.470.10:FF:000006">
    <property type="entry name" value="Uracil-DNA glycosylase"/>
    <property type="match status" value="1"/>
</dbReference>
<dbReference type="Gene3D" id="3.40.470.10">
    <property type="entry name" value="Uracil-DNA glycosylase-like domain"/>
    <property type="match status" value="1"/>
</dbReference>
<dbReference type="HAMAP" id="MF_00148">
    <property type="entry name" value="UDG"/>
    <property type="match status" value="1"/>
</dbReference>
<dbReference type="InterPro" id="IPR002043">
    <property type="entry name" value="UDG_fam1"/>
</dbReference>
<dbReference type="InterPro" id="IPR018085">
    <property type="entry name" value="Ura-DNA_Glyclase_AS"/>
</dbReference>
<dbReference type="InterPro" id="IPR005122">
    <property type="entry name" value="Uracil-DNA_glycosylase-like"/>
</dbReference>
<dbReference type="InterPro" id="IPR036895">
    <property type="entry name" value="Uracil-DNA_glycosylase-like_sf"/>
</dbReference>
<dbReference type="NCBIfam" id="NF003588">
    <property type="entry name" value="PRK05254.1-1"/>
    <property type="match status" value="1"/>
</dbReference>
<dbReference type="NCBIfam" id="NF003592">
    <property type="entry name" value="PRK05254.1-5"/>
    <property type="match status" value="1"/>
</dbReference>
<dbReference type="PANTHER" id="PTHR11264">
    <property type="entry name" value="URACIL-DNA GLYCOSYLASE"/>
    <property type="match status" value="1"/>
</dbReference>
<dbReference type="PANTHER" id="PTHR11264:SF0">
    <property type="entry name" value="URACIL-DNA GLYCOSYLASE"/>
    <property type="match status" value="1"/>
</dbReference>
<dbReference type="Pfam" id="PF03167">
    <property type="entry name" value="UDG"/>
    <property type="match status" value="1"/>
</dbReference>
<dbReference type="SMART" id="SM00986">
    <property type="entry name" value="UDG"/>
    <property type="match status" value="1"/>
</dbReference>
<dbReference type="SMART" id="SM00987">
    <property type="entry name" value="UreE_C"/>
    <property type="match status" value="1"/>
</dbReference>
<dbReference type="SUPFAM" id="SSF52141">
    <property type="entry name" value="Uracil-DNA glycosylase-like"/>
    <property type="match status" value="1"/>
</dbReference>
<dbReference type="PROSITE" id="PS00130">
    <property type="entry name" value="U_DNA_GLYCOSYLASE"/>
    <property type="match status" value="1"/>
</dbReference>
<protein>
    <recommendedName>
        <fullName evidence="1">Uracil-DNA glycosylase</fullName>
        <shortName evidence="1">UDG</shortName>
        <ecNumber evidence="1">3.2.2.27</ecNumber>
    </recommendedName>
</protein>
<gene>
    <name evidence="1" type="primary">ung</name>
    <name type="ordered locus">Noca_4002</name>
</gene>
<reference key="1">
    <citation type="submission" date="2006-12" db="EMBL/GenBank/DDBJ databases">
        <title>Complete sequence of chromosome 1 of Nocardioides sp. JS614.</title>
        <authorList>
            <person name="Copeland A."/>
            <person name="Lucas S."/>
            <person name="Lapidus A."/>
            <person name="Barry K."/>
            <person name="Detter J.C."/>
            <person name="Glavina del Rio T."/>
            <person name="Hammon N."/>
            <person name="Israni S."/>
            <person name="Dalin E."/>
            <person name="Tice H."/>
            <person name="Pitluck S."/>
            <person name="Thompson L.S."/>
            <person name="Brettin T."/>
            <person name="Bruce D."/>
            <person name="Han C."/>
            <person name="Tapia R."/>
            <person name="Schmutz J."/>
            <person name="Larimer F."/>
            <person name="Land M."/>
            <person name="Hauser L."/>
            <person name="Kyrpides N."/>
            <person name="Kim E."/>
            <person name="Mattes T."/>
            <person name="Gossett J."/>
            <person name="Richardson P."/>
        </authorList>
    </citation>
    <scope>NUCLEOTIDE SEQUENCE [LARGE SCALE GENOMIC DNA]</scope>
    <source>
        <strain>ATCC BAA-499 / JS614</strain>
    </source>
</reference>
<keyword id="KW-0963">Cytoplasm</keyword>
<keyword id="KW-0227">DNA damage</keyword>
<keyword id="KW-0234">DNA repair</keyword>
<keyword id="KW-0378">Hydrolase</keyword>
<keyword id="KW-1185">Reference proteome</keyword>
<name>UNG_NOCSJ</name>
<proteinExistence type="inferred from homology"/>
<feature type="chain" id="PRO_1000009923" description="Uracil-DNA glycosylase">
    <location>
        <begin position="1"/>
        <end position="230"/>
    </location>
</feature>
<feature type="active site" description="Proton acceptor" evidence="1">
    <location>
        <position position="71"/>
    </location>
</feature>
<organism>
    <name type="scientific">Nocardioides sp. (strain ATCC BAA-499 / JS614)</name>
    <dbReference type="NCBI Taxonomy" id="196162"/>
    <lineage>
        <taxon>Bacteria</taxon>
        <taxon>Bacillati</taxon>
        <taxon>Actinomycetota</taxon>
        <taxon>Actinomycetes</taxon>
        <taxon>Propionibacteriales</taxon>
        <taxon>Nocardioidaceae</taxon>
        <taxon>Nocardioides</taxon>
    </lineage>
</organism>
<sequence>MSALAGLVDKGLMAPDWAQALAPVDEQIAAMGRFLREELAAGRTYQPTGEWVFRAFQRPLADVRVLIVGQDPYPNPEHPIGLSFAVRGDVWPLPPSLVNIYTELRDDLGLMPPRHGDLTAWADQGVMLLNRSLTVRPGASNSHRGKGWEPITACAIEALVRRGGPLVAILWGSDARNLRPMLGQIPVVESPHPSPLSAYRGFFGSRPFSRANRLLVEQGGRAVDWALPME</sequence>
<comment type="function">
    <text evidence="1">Excises uracil residues from the DNA which can arise as a result of misincorporation of dUMP residues by DNA polymerase or due to deamination of cytosine.</text>
</comment>
<comment type="catalytic activity">
    <reaction evidence="1">
        <text>Hydrolyzes single-stranded DNA or mismatched double-stranded DNA and polynucleotides, releasing free uracil.</text>
        <dbReference type="EC" id="3.2.2.27"/>
    </reaction>
</comment>
<comment type="subcellular location">
    <subcellularLocation>
        <location evidence="1">Cytoplasm</location>
    </subcellularLocation>
</comment>
<comment type="similarity">
    <text evidence="1">Belongs to the uracil-DNA glycosylase (UDG) superfamily. UNG family.</text>
</comment>